<dbReference type="EC" id="1.6.5.-" evidence="1"/>
<dbReference type="EC" id="1.7.1.17" evidence="1"/>
<dbReference type="EMBL" id="BA000037">
    <property type="protein sequence ID" value="BAC94762.1"/>
    <property type="status" value="ALT_INIT"/>
    <property type="molecule type" value="Genomic_DNA"/>
</dbReference>
<dbReference type="RefSeq" id="WP_011150540.1">
    <property type="nucleotide sequence ID" value="NC_005139.1"/>
</dbReference>
<dbReference type="SMR" id="Q7MK12"/>
<dbReference type="STRING" id="672.VV93_v1c17610"/>
<dbReference type="KEGG" id="vvy:VV1998"/>
<dbReference type="eggNOG" id="COG1182">
    <property type="taxonomic scope" value="Bacteria"/>
</dbReference>
<dbReference type="HOGENOM" id="CLU_088964_0_0_6"/>
<dbReference type="Proteomes" id="UP000002675">
    <property type="component" value="Chromosome I"/>
</dbReference>
<dbReference type="GO" id="GO:0009055">
    <property type="term" value="F:electron transfer activity"/>
    <property type="evidence" value="ECO:0007669"/>
    <property type="project" value="UniProtKB-UniRule"/>
</dbReference>
<dbReference type="GO" id="GO:0010181">
    <property type="term" value="F:FMN binding"/>
    <property type="evidence" value="ECO:0007669"/>
    <property type="project" value="UniProtKB-UniRule"/>
</dbReference>
<dbReference type="GO" id="GO:0016652">
    <property type="term" value="F:oxidoreductase activity, acting on NAD(P)H as acceptor"/>
    <property type="evidence" value="ECO:0007669"/>
    <property type="project" value="UniProtKB-UniRule"/>
</dbReference>
<dbReference type="GO" id="GO:0016655">
    <property type="term" value="F:oxidoreductase activity, acting on NAD(P)H, quinone or similar compound as acceptor"/>
    <property type="evidence" value="ECO:0007669"/>
    <property type="project" value="InterPro"/>
</dbReference>
<dbReference type="Gene3D" id="3.40.50.360">
    <property type="match status" value="1"/>
</dbReference>
<dbReference type="HAMAP" id="MF_01216">
    <property type="entry name" value="Azoreductase_type1"/>
    <property type="match status" value="1"/>
</dbReference>
<dbReference type="InterPro" id="IPR003680">
    <property type="entry name" value="Flavodoxin_fold"/>
</dbReference>
<dbReference type="InterPro" id="IPR029039">
    <property type="entry name" value="Flavoprotein-like_sf"/>
</dbReference>
<dbReference type="InterPro" id="IPR050104">
    <property type="entry name" value="FMN-dep_NADH:Q_OxRdtase_AzoR1"/>
</dbReference>
<dbReference type="InterPro" id="IPR023048">
    <property type="entry name" value="NADH:quinone_OxRdtase_FMN_depd"/>
</dbReference>
<dbReference type="PANTHER" id="PTHR43741">
    <property type="entry name" value="FMN-DEPENDENT NADH-AZOREDUCTASE 1"/>
    <property type="match status" value="1"/>
</dbReference>
<dbReference type="PANTHER" id="PTHR43741:SF2">
    <property type="entry name" value="FMN-DEPENDENT NADH:QUINONE OXIDOREDUCTASE"/>
    <property type="match status" value="1"/>
</dbReference>
<dbReference type="Pfam" id="PF02525">
    <property type="entry name" value="Flavodoxin_2"/>
    <property type="match status" value="1"/>
</dbReference>
<dbReference type="SUPFAM" id="SSF52218">
    <property type="entry name" value="Flavoproteins"/>
    <property type="match status" value="1"/>
</dbReference>
<evidence type="ECO:0000255" key="1">
    <source>
        <dbReference type="HAMAP-Rule" id="MF_01216"/>
    </source>
</evidence>
<evidence type="ECO:0000305" key="2"/>
<organism>
    <name type="scientific">Vibrio vulnificus (strain YJ016)</name>
    <dbReference type="NCBI Taxonomy" id="196600"/>
    <lineage>
        <taxon>Bacteria</taxon>
        <taxon>Pseudomonadati</taxon>
        <taxon>Pseudomonadota</taxon>
        <taxon>Gammaproteobacteria</taxon>
        <taxon>Vibrionales</taxon>
        <taxon>Vibrionaceae</taxon>
        <taxon>Vibrio</taxon>
    </lineage>
</organism>
<comment type="function">
    <text evidence="1">Quinone reductase that provides resistance to thiol-specific stress caused by electrophilic quinones.</text>
</comment>
<comment type="function">
    <text evidence="1">Also exhibits azoreductase activity. Catalyzes the reductive cleavage of the azo bond in aromatic azo compounds to the corresponding amines.</text>
</comment>
<comment type="catalytic activity">
    <reaction evidence="1">
        <text>2 a quinone + NADH + H(+) = 2 a 1,4-benzosemiquinone + NAD(+)</text>
        <dbReference type="Rhea" id="RHEA:65952"/>
        <dbReference type="ChEBI" id="CHEBI:15378"/>
        <dbReference type="ChEBI" id="CHEBI:57540"/>
        <dbReference type="ChEBI" id="CHEBI:57945"/>
        <dbReference type="ChEBI" id="CHEBI:132124"/>
        <dbReference type="ChEBI" id="CHEBI:134225"/>
    </reaction>
</comment>
<comment type="catalytic activity">
    <reaction evidence="1">
        <text>N,N-dimethyl-1,4-phenylenediamine + anthranilate + 2 NAD(+) = 2-(4-dimethylaminophenyl)diazenylbenzoate + 2 NADH + 2 H(+)</text>
        <dbReference type="Rhea" id="RHEA:55872"/>
        <dbReference type="ChEBI" id="CHEBI:15378"/>
        <dbReference type="ChEBI" id="CHEBI:15783"/>
        <dbReference type="ChEBI" id="CHEBI:16567"/>
        <dbReference type="ChEBI" id="CHEBI:57540"/>
        <dbReference type="ChEBI" id="CHEBI:57945"/>
        <dbReference type="ChEBI" id="CHEBI:71579"/>
        <dbReference type="EC" id="1.7.1.17"/>
    </reaction>
</comment>
<comment type="cofactor">
    <cofactor evidence="1">
        <name>FMN</name>
        <dbReference type="ChEBI" id="CHEBI:58210"/>
    </cofactor>
    <text evidence="1">Binds 1 FMN per subunit.</text>
</comment>
<comment type="subunit">
    <text evidence="1">Homodimer.</text>
</comment>
<comment type="similarity">
    <text evidence="1">Belongs to the azoreductase type 1 family.</text>
</comment>
<comment type="sequence caution" evidence="2">
    <conflict type="erroneous initiation">
        <sequence resource="EMBL-CDS" id="BAC94762"/>
    </conflict>
</comment>
<accession>Q7MK12</accession>
<feature type="chain" id="PRO_0000166363" description="FMN-dependent NADH:quinone oxidoreductase">
    <location>
        <begin position="1"/>
        <end position="195"/>
    </location>
</feature>
<feature type="binding site" evidence="1">
    <location>
        <position position="10"/>
    </location>
    <ligand>
        <name>FMN</name>
        <dbReference type="ChEBI" id="CHEBI:58210"/>
    </ligand>
</feature>
<feature type="binding site" evidence="1">
    <location>
        <begin position="16"/>
        <end position="18"/>
    </location>
    <ligand>
        <name>FMN</name>
        <dbReference type="ChEBI" id="CHEBI:58210"/>
    </ligand>
</feature>
<feature type="binding site" evidence="1">
    <location>
        <begin position="91"/>
        <end position="94"/>
    </location>
    <ligand>
        <name>FMN</name>
        <dbReference type="ChEBI" id="CHEBI:58210"/>
    </ligand>
</feature>
<feature type="binding site" evidence="1">
    <location>
        <begin position="135"/>
        <end position="138"/>
    </location>
    <ligand>
        <name>FMN</name>
        <dbReference type="ChEBI" id="CHEBI:58210"/>
    </ligand>
</feature>
<name>AZOR_VIBVY</name>
<protein>
    <recommendedName>
        <fullName evidence="1">FMN-dependent NADH:quinone oxidoreductase</fullName>
        <ecNumber evidence="1">1.6.5.-</ecNumber>
    </recommendedName>
    <alternativeName>
        <fullName evidence="1">Azo-dye reductase</fullName>
    </alternativeName>
    <alternativeName>
        <fullName evidence="1">FMN-dependent NADH-azo compound oxidoreductase</fullName>
    </alternativeName>
    <alternativeName>
        <fullName evidence="1">FMN-dependent NADH-azoreductase</fullName>
        <ecNumber evidence="1">1.7.1.17</ecNumber>
    </alternativeName>
</protein>
<sequence length="195" mass="21108">MSRLLVLKSSILGDYSQSNKLVDEFINHFDQQQIVVRDLAQQPLPVLDFQVATALRAAGELTAEQQAIVTLSDTLIDEIKAADTLVIAAPMYNFTIPTQLKNWIDLIARAGVTFTYTEQGPKGLIEGKKAVIVTTRGGIHKDAASDIITPYLKTVLGFVGITEVEFVYAEALNMGDDFANKGLASASEHLAALTA</sequence>
<gene>
    <name evidence="1" type="primary">azoR</name>
    <name type="ordered locus">VV1998</name>
</gene>
<keyword id="KW-0285">Flavoprotein</keyword>
<keyword id="KW-0288">FMN</keyword>
<keyword id="KW-0520">NAD</keyword>
<keyword id="KW-0560">Oxidoreductase</keyword>
<reference key="1">
    <citation type="journal article" date="2003" name="Genome Res.">
        <title>Comparative genome analysis of Vibrio vulnificus, a marine pathogen.</title>
        <authorList>
            <person name="Chen C.-Y."/>
            <person name="Wu K.-M."/>
            <person name="Chang Y.-C."/>
            <person name="Chang C.-H."/>
            <person name="Tsai H.-C."/>
            <person name="Liao T.-L."/>
            <person name="Liu Y.-M."/>
            <person name="Chen H.-J."/>
            <person name="Shen A.B.-T."/>
            <person name="Li J.-C."/>
            <person name="Su T.-L."/>
            <person name="Shao C.-P."/>
            <person name="Lee C.-T."/>
            <person name="Hor L.-I."/>
            <person name="Tsai S.-F."/>
        </authorList>
    </citation>
    <scope>NUCLEOTIDE SEQUENCE [LARGE SCALE GENOMIC DNA]</scope>
    <source>
        <strain>YJ016</strain>
    </source>
</reference>
<proteinExistence type="inferred from homology"/>